<sequence length="390" mass="42742">MDSEKKNKKKQIAILGSTGSIGTQALQVIEEHPDLYEAYALTANNRVELLIAQARKFQPEVVVIANEEKYAQLKEALSDLPIKVYAGIDAVCQIVEAGPVDMVLTAMVGYAGLKPTINAIRAKKAIALANKETLVVAGELINQLAQQYHTPILPVDSEHSAVFQCLAGEVGNPIEKVILTASGGPFRTCTLEQLKSVTKTQALKHPNWEMGAKITIDSASMMNKGFEVIEAKWLFGVQPSQIEVVVHPQSVIHSMVQFEDGAVKAQLGMPDMRLPIQYAFSYPDRICSSFDRLDFTQCTNLTFEQPDTKRFRNLALAYEAMYRGGNMPCIVNAANEVVVAAFLRDGISFLGMSDVIEKTMERAAFVAAPAYDDYVATDAEARRIAAELIP</sequence>
<proteinExistence type="inferred from homology"/>
<accession>Q8A684</accession>
<dbReference type="EC" id="1.1.1.267" evidence="1"/>
<dbReference type="EMBL" id="AE015928">
    <property type="protein sequence ID" value="AAO77109.1"/>
    <property type="molecule type" value="Genomic_DNA"/>
</dbReference>
<dbReference type="RefSeq" id="NP_810915.1">
    <property type="nucleotide sequence ID" value="NC_004663.1"/>
</dbReference>
<dbReference type="RefSeq" id="WP_008766370.1">
    <property type="nucleotide sequence ID" value="NC_004663.1"/>
</dbReference>
<dbReference type="SMR" id="Q8A684"/>
<dbReference type="FunCoup" id="Q8A684">
    <property type="interactions" value="329"/>
</dbReference>
<dbReference type="STRING" id="226186.BT_2002"/>
<dbReference type="PaxDb" id="226186-BT_2002"/>
<dbReference type="EnsemblBacteria" id="AAO77109">
    <property type="protein sequence ID" value="AAO77109"/>
    <property type="gene ID" value="BT_2002"/>
</dbReference>
<dbReference type="KEGG" id="bth:BT_2002"/>
<dbReference type="PATRIC" id="fig|226186.12.peg.2053"/>
<dbReference type="eggNOG" id="COG0743">
    <property type="taxonomic scope" value="Bacteria"/>
</dbReference>
<dbReference type="HOGENOM" id="CLU_035714_4_0_10"/>
<dbReference type="InParanoid" id="Q8A684"/>
<dbReference type="OrthoDB" id="9806546at2"/>
<dbReference type="UniPathway" id="UPA00056">
    <property type="reaction ID" value="UER00092"/>
</dbReference>
<dbReference type="Proteomes" id="UP000001414">
    <property type="component" value="Chromosome"/>
</dbReference>
<dbReference type="GO" id="GO:0030604">
    <property type="term" value="F:1-deoxy-D-xylulose-5-phosphate reductoisomerase activity"/>
    <property type="evidence" value="ECO:0000318"/>
    <property type="project" value="GO_Central"/>
</dbReference>
<dbReference type="GO" id="GO:0030145">
    <property type="term" value="F:manganese ion binding"/>
    <property type="evidence" value="ECO:0000318"/>
    <property type="project" value="GO_Central"/>
</dbReference>
<dbReference type="GO" id="GO:0070402">
    <property type="term" value="F:NADPH binding"/>
    <property type="evidence" value="ECO:0000318"/>
    <property type="project" value="GO_Central"/>
</dbReference>
<dbReference type="GO" id="GO:0051484">
    <property type="term" value="P:isopentenyl diphosphate biosynthetic process, methylerythritol 4-phosphate pathway involved in terpenoid biosynthetic process"/>
    <property type="evidence" value="ECO:0000318"/>
    <property type="project" value="GO_Central"/>
</dbReference>
<dbReference type="FunFam" id="3.40.50.720:FF:000045">
    <property type="entry name" value="1-deoxy-D-xylulose 5-phosphate reductoisomerase"/>
    <property type="match status" value="1"/>
</dbReference>
<dbReference type="Gene3D" id="1.10.1740.10">
    <property type="match status" value="1"/>
</dbReference>
<dbReference type="Gene3D" id="3.40.50.720">
    <property type="entry name" value="NAD(P)-binding Rossmann-like Domain"/>
    <property type="match status" value="1"/>
</dbReference>
<dbReference type="HAMAP" id="MF_00183">
    <property type="entry name" value="DXP_reductoisom"/>
    <property type="match status" value="1"/>
</dbReference>
<dbReference type="InterPro" id="IPR003821">
    <property type="entry name" value="DXP_reductoisomerase"/>
</dbReference>
<dbReference type="InterPro" id="IPR013644">
    <property type="entry name" value="DXP_reductoisomerase_C"/>
</dbReference>
<dbReference type="InterPro" id="IPR013512">
    <property type="entry name" value="DXP_reductoisomerase_N"/>
</dbReference>
<dbReference type="InterPro" id="IPR026877">
    <property type="entry name" value="DXPR_C"/>
</dbReference>
<dbReference type="InterPro" id="IPR036169">
    <property type="entry name" value="DXPR_C_sf"/>
</dbReference>
<dbReference type="InterPro" id="IPR036291">
    <property type="entry name" value="NAD(P)-bd_dom_sf"/>
</dbReference>
<dbReference type="NCBIfam" id="TIGR00243">
    <property type="entry name" value="Dxr"/>
    <property type="match status" value="1"/>
</dbReference>
<dbReference type="NCBIfam" id="NF009114">
    <property type="entry name" value="PRK12464.1"/>
    <property type="match status" value="1"/>
</dbReference>
<dbReference type="PANTHER" id="PTHR30525">
    <property type="entry name" value="1-DEOXY-D-XYLULOSE 5-PHOSPHATE REDUCTOISOMERASE"/>
    <property type="match status" value="1"/>
</dbReference>
<dbReference type="PANTHER" id="PTHR30525:SF0">
    <property type="entry name" value="1-DEOXY-D-XYLULOSE 5-PHOSPHATE REDUCTOISOMERASE, CHLOROPLASTIC"/>
    <property type="match status" value="1"/>
</dbReference>
<dbReference type="Pfam" id="PF08436">
    <property type="entry name" value="DXP_redisom_C"/>
    <property type="match status" value="1"/>
</dbReference>
<dbReference type="Pfam" id="PF02670">
    <property type="entry name" value="DXP_reductoisom"/>
    <property type="match status" value="1"/>
</dbReference>
<dbReference type="Pfam" id="PF13288">
    <property type="entry name" value="DXPR_C"/>
    <property type="match status" value="1"/>
</dbReference>
<dbReference type="PIRSF" id="PIRSF006205">
    <property type="entry name" value="Dxp_reductismrs"/>
    <property type="match status" value="1"/>
</dbReference>
<dbReference type="SUPFAM" id="SSF69055">
    <property type="entry name" value="1-deoxy-D-xylulose-5-phosphate reductoisomerase, C-terminal domain"/>
    <property type="match status" value="1"/>
</dbReference>
<dbReference type="SUPFAM" id="SSF55347">
    <property type="entry name" value="Glyceraldehyde-3-phosphate dehydrogenase-like, C-terminal domain"/>
    <property type="match status" value="1"/>
</dbReference>
<dbReference type="SUPFAM" id="SSF51735">
    <property type="entry name" value="NAD(P)-binding Rossmann-fold domains"/>
    <property type="match status" value="1"/>
</dbReference>
<keyword id="KW-0414">Isoprene biosynthesis</keyword>
<keyword id="KW-0464">Manganese</keyword>
<keyword id="KW-0479">Metal-binding</keyword>
<keyword id="KW-0521">NADP</keyword>
<keyword id="KW-0560">Oxidoreductase</keyword>
<keyword id="KW-1185">Reference proteome</keyword>
<gene>
    <name evidence="1" type="primary">dxr</name>
    <name type="ordered locus">BT_2002</name>
</gene>
<organism>
    <name type="scientific">Bacteroides thetaiotaomicron (strain ATCC 29148 / DSM 2079 / JCM 5827 / CCUG 10774 / NCTC 10582 / VPI-5482 / E50)</name>
    <dbReference type="NCBI Taxonomy" id="226186"/>
    <lineage>
        <taxon>Bacteria</taxon>
        <taxon>Pseudomonadati</taxon>
        <taxon>Bacteroidota</taxon>
        <taxon>Bacteroidia</taxon>
        <taxon>Bacteroidales</taxon>
        <taxon>Bacteroidaceae</taxon>
        <taxon>Bacteroides</taxon>
    </lineage>
</organism>
<feature type="chain" id="PRO_0000163615" description="1-deoxy-D-xylulose 5-phosphate reductoisomerase">
    <location>
        <begin position="1"/>
        <end position="390"/>
    </location>
</feature>
<feature type="binding site" evidence="1">
    <location>
        <position position="18"/>
    </location>
    <ligand>
        <name>NADPH</name>
        <dbReference type="ChEBI" id="CHEBI:57783"/>
    </ligand>
</feature>
<feature type="binding site" evidence="1">
    <location>
        <position position="19"/>
    </location>
    <ligand>
        <name>NADPH</name>
        <dbReference type="ChEBI" id="CHEBI:57783"/>
    </ligand>
</feature>
<feature type="binding site" evidence="1">
    <location>
        <position position="20"/>
    </location>
    <ligand>
        <name>NADPH</name>
        <dbReference type="ChEBI" id="CHEBI:57783"/>
    </ligand>
</feature>
<feature type="binding site" evidence="1">
    <location>
        <position position="21"/>
    </location>
    <ligand>
        <name>NADPH</name>
        <dbReference type="ChEBI" id="CHEBI:57783"/>
    </ligand>
</feature>
<feature type="binding site" evidence="1">
    <location>
        <position position="130"/>
    </location>
    <ligand>
        <name>NADPH</name>
        <dbReference type="ChEBI" id="CHEBI:57783"/>
    </ligand>
</feature>
<feature type="binding site" evidence="1">
    <location>
        <position position="131"/>
    </location>
    <ligand>
        <name>1-deoxy-D-xylulose 5-phosphate</name>
        <dbReference type="ChEBI" id="CHEBI:57792"/>
    </ligand>
</feature>
<feature type="binding site" evidence="1">
    <location>
        <position position="132"/>
    </location>
    <ligand>
        <name>NADPH</name>
        <dbReference type="ChEBI" id="CHEBI:57783"/>
    </ligand>
</feature>
<feature type="binding site" evidence="1">
    <location>
        <position position="156"/>
    </location>
    <ligand>
        <name>Mn(2+)</name>
        <dbReference type="ChEBI" id="CHEBI:29035"/>
    </ligand>
</feature>
<feature type="binding site" evidence="1">
    <location>
        <position position="157"/>
    </location>
    <ligand>
        <name>1-deoxy-D-xylulose 5-phosphate</name>
        <dbReference type="ChEBI" id="CHEBI:57792"/>
    </ligand>
</feature>
<feature type="binding site" evidence="1">
    <location>
        <position position="158"/>
    </location>
    <ligand>
        <name>1-deoxy-D-xylulose 5-phosphate</name>
        <dbReference type="ChEBI" id="CHEBI:57792"/>
    </ligand>
</feature>
<feature type="binding site" evidence="1">
    <location>
        <position position="158"/>
    </location>
    <ligand>
        <name>Mn(2+)</name>
        <dbReference type="ChEBI" id="CHEBI:29035"/>
    </ligand>
</feature>
<feature type="binding site" evidence="1">
    <location>
        <position position="182"/>
    </location>
    <ligand>
        <name>1-deoxy-D-xylulose 5-phosphate</name>
        <dbReference type="ChEBI" id="CHEBI:57792"/>
    </ligand>
</feature>
<feature type="binding site" evidence="1">
    <location>
        <position position="205"/>
    </location>
    <ligand>
        <name>1-deoxy-D-xylulose 5-phosphate</name>
        <dbReference type="ChEBI" id="CHEBI:57792"/>
    </ligand>
</feature>
<feature type="binding site" evidence="1">
    <location>
        <position position="211"/>
    </location>
    <ligand>
        <name>NADPH</name>
        <dbReference type="ChEBI" id="CHEBI:57783"/>
    </ligand>
</feature>
<feature type="binding site" evidence="1">
    <location>
        <position position="218"/>
    </location>
    <ligand>
        <name>1-deoxy-D-xylulose 5-phosphate</name>
        <dbReference type="ChEBI" id="CHEBI:57792"/>
    </ligand>
</feature>
<feature type="binding site" evidence="1">
    <location>
        <position position="223"/>
    </location>
    <ligand>
        <name>1-deoxy-D-xylulose 5-phosphate</name>
        <dbReference type="ChEBI" id="CHEBI:57792"/>
    </ligand>
</feature>
<feature type="binding site" evidence="1">
    <location>
        <position position="224"/>
    </location>
    <ligand>
        <name>1-deoxy-D-xylulose 5-phosphate</name>
        <dbReference type="ChEBI" id="CHEBI:57792"/>
    </ligand>
</feature>
<feature type="binding site" evidence="1">
    <location>
        <position position="227"/>
    </location>
    <ligand>
        <name>1-deoxy-D-xylulose 5-phosphate</name>
        <dbReference type="ChEBI" id="CHEBI:57792"/>
    </ligand>
</feature>
<feature type="binding site" evidence="1">
    <location>
        <position position="227"/>
    </location>
    <ligand>
        <name>Mn(2+)</name>
        <dbReference type="ChEBI" id="CHEBI:29035"/>
    </ligand>
</feature>
<protein>
    <recommendedName>
        <fullName evidence="1">1-deoxy-D-xylulose 5-phosphate reductoisomerase</fullName>
        <shortName evidence="1">DXP reductoisomerase</shortName>
        <ecNumber evidence="1">1.1.1.267</ecNumber>
    </recommendedName>
    <alternativeName>
        <fullName evidence="1">1-deoxyxylulose-5-phosphate reductoisomerase</fullName>
    </alternativeName>
    <alternativeName>
        <fullName evidence="1">2-C-methyl-D-erythritol 4-phosphate synthase</fullName>
    </alternativeName>
</protein>
<evidence type="ECO:0000255" key="1">
    <source>
        <dbReference type="HAMAP-Rule" id="MF_00183"/>
    </source>
</evidence>
<name>DXR_BACTN</name>
<comment type="function">
    <text evidence="1">Catalyzes the NADPH-dependent rearrangement and reduction of 1-deoxy-D-xylulose-5-phosphate (DXP) to 2-C-methyl-D-erythritol 4-phosphate (MEP).</text>
</comment>
<comment type="catalytic activity">
    <reaction evidence="1">
        <text>2-C-methyl-D-erythritol 4-phosphate + NADP(+) = 1-deoxy-D-xylulose 5-phosphate + NADPH + H(+)</text>
        <dbReference type="Rhea" id="RHEA:13717"/>
        <dbReference type="ChEBI" id="CHEBI:15378"/>
        <dbReference type="ChEBI" id="CHEBI:57783"/>
        <dbReference type="ChEBI" id="CHEBI:57792"/>
        <dbReference type="ChEBI" id="CHEBI:58262"/>
        <dbReference type="ChEBI" id="CHEBI:58349"/>
        <dbReference type="EC" id="1.1.1.267"/>
    </reaction>
    <physiologicalReaction direction="right-to-left" evidence="1">
        <dbReference type="Rhea" id="RHEA:13719"/>
    </physiologicalReaction>
</comment>
<comment type="cofactor">
    <cofactor evidence="1">
        <name>Mg(2+)</name>
        <dbReference type="ChEBI" id="CHEBI:18420"/>
    </cofactor>
    <cofactor evidence="1">
        <name>Mn(2+)</name>
        <dbReference type="ChEBI" id="CHEBI:29035"/>
    </cofactor>
</comment>
<comment type="pathway">
    <text evidence="1">Isoprenoid biosynthesis; isopentenyl diphosphate biosynthesis via DXP pathway; isopentenyl diphosphate from 1-deoxy-D-xylulose 5-phosphate: step 1/6.</text>
</comment>
<comment type="similarity">
    <text evidence="1">Belongs to the DXR family.</text>
</comment>
<reference key="1">
    <citation type="journal article" date="2003" name="Science">
        <title>A genomic view of the human-Bacteroides thetaiotaomicron symbiosis.</title>
        <authorList>
            <person name="Xu J."/>
            <person name="Bjursell M.K."/>
            <person name="Himrod J."/>
            <person name="Deng S."/>
            <person name="Carmichael L.K."/>
            <person name="Chiang H.C."/>
            <person name="Hooper L.V."/>
            <person name="Gordon J.I."/>
        </authorList>
    </citation>
    <scope>NUCLEOTIDE SEQUENCE [LARGE SCALE GENOMIC DNA]</scope>
    <source>
        <strain>ATCC 29148 / DSM 2079 / JCM 5827 / CCUG 10774 / NCTC 10582 / VPI-5482 / E50</strain>
    </source>
</reference>